<reference key="1">
    <citation type="journal article" date="2001" name="Nature">
        <title>Complete genome sequence of Salmonella enterica serovar Typhimurium LT2.</title>
        <authorList>
            <person name="McClelland M."/>
            <person name="Sanderson K.E."/>
            <person name="Spieth J."/>
            <person name="Clifton S.W."/>
            <person name="Latreille P."/>
            <person name="Courtney L."/>
            <person name="Porwollik S."/>
            <person name="Ali J."/>
            <person name="Dante M."/>
            <person name="Du F."/>
            <person name="Hou S."/>
            <person name="Layman D."/>
            <person name="Leonard S."/>
            <person name="Nguyen C."/>
            <person name="Scott K."/>
            <person name="Holmes A."/>
            <person name="Grewal N."/>
            <person name="Mulvaney E."/>
            <person name="Ryan E."/>
            <person name="Sun H."/>
            <person name="Florea L."/>
            <person name="Miller W."/>
            <person name="Stoneking T."/>
            <person name="Nhan M."/>
            <person name="Waterston R."/>
            <person name="Wilson R.K."/>
        </authorList>
    </citation>
    <scope>NUCLEOTIDE SEQUENCE [LARGE SCALE GENOMIC DNA]</scope>
    <source>
        <strain>LT2 / SGSC1412 / ATCC 700720</strain>
    </source>
</reference>
<organism>
    <name type="scientific">Salmonella typhimurium (strain LT2 / SGSC1412 / ATCC 700720)</name>
    <dbReference type="NCBI Taxonomy" id="99287"/>
    <lineage>
        <taxon>Bacteria</taxon>
        <taxon>Pseudomonadati</taxon>
        <taxon>Pseudomonadota</taxon>
        <taxon>Gammaproteobacteria</taxon>
        <taxon>Enterobacterales</taxon>
        <taxon>Enterobacteriaceae</taxon>
        <taxon>Salmonella</taxon>
    </lineage>
</organism>
<protein>
    <recommendedName>
        <fullName evidence="1">Triosephosphate isomerase</fullName>
        <shortName evidence="1">TIM</shortName>
        <shortName evidence="1">TPI</shortName>
        <ecNumber evidence="1">5.3.1.1</ecNumber>
    </recommendedName>
    <alternativeName>
        <fullName evidence="1">Triose-phosphate isomerase</fullName>
    </alternativeName>
</protein>
<accession>Q8ZKP7</accession>
<keyword id="KW-0963">Cytoplasm</keyword>
<keyword id="KW-0312">Gluconeogenesis</keyword>
<keyword id="KW-0324">Glycolysis</keyword>
<keyword id="KW-0413">Isomerase</keyword>
<keyword id="KW-1185">Reference proteome</keyword>
<gene>
    <name evidence="1" type="primary">tpiA</name>
    <name type="ordered locus">STM4081</name>
</gene>
<comment type="function">
    <text evidence="1">Involved in the gluconeogenesis. Catalyzes stereospecifically the conversion of dihydroxyacetone phosphate (DHAP) to D-glyceraldehyde-3-phosphate (G3P).</text>
</comment>
<comment type="catalytic activity">
    <reaction evidence="1">
        <text>D-glyceraldehyde 3-phosphate = dihydroxyacetone phosphate</text>
        <dbReference type="Rhea" id="RHEA:18585"/>
        <dbReference type="ChEBI" id="CHEBI:57642"/>
        <dbReference type="ChEBI" id="CHEBI:59776"/>
        <dbReference type="EC" id="5.3.1.1"/>
    </reaction>
</comment>
<comment type="pathway">
    <text evidence="1">Carbohydrate biosynthesis; gluconeogenesis.</text>
</comment>
<comment type="pathway">
    <text evidence="1">Carbohydrate degradation; glycolysis; D-glyceraldehyde 3-phosphate from glycerone phosphate: step 1/1.</text>
</comment>
<comment type="subunit">
    <text evidence="1">Homodimer.</text>
</comment>
<comment type="subcellular location">
    <subcellularLocation>
        <location evidence="1">Cytoplasm</location>
    </subcellularLocation>
</comment>
<comment type="similarity">
    <text evidence="1">Belongs to the triosephosphate isomerase family.</text>
</comment>
<dbReference type="EC" id="5.3.1.1" evidence="1"/>
<dbReference type="EMBL" id="AE006468">
    <property type="protein sequence ID" value="AAL22921.1"/>
    <property type="molecule type" value="Genomic_DNA"/>
</dbReference>
<dbReference type="RefSeq" id="NP_462962.1">
    <property type="nucleotide sequence ID" value="NC_003197.2"/>
</dbReference>
<dbReference type="RefSeq" id="WP_001216339.1">
    <property type="nucleotide sequence ID" value="NC_003197.2"/>
</dbReference>
<dbReference type="SMR" id="Q8ZKP7"/>
<dbReference type="STRING" id="99287.STM4081"/>
<dbReference type="PaxDb" id="99287-STM4081"/>
<dbReference type="GeneID" id="1255608"/>
<dbReference type="KEGG" id="stm:STM4081"/>
<dbReference type="PATRIC" id="fig|99287.12.peg.4301"/>
<dbReference type="HOGENOM" id="CLU_024251_2_1_6"/>
<dbReference type="OMA" id="NWKMHMT"/>
<dbReference type="PhylomeDB" id="Q8ZKP7"/>
<dbReference type="BioCyc" id="SENT99287:STM4081-MONOMER"/>
<dbReference type="UniPathway" id="UPA00109">
    <property type="reaction ID" value="UER00189"/>
</dbReference>
<dbReference type="UniPathway" id="UPA00138"/>
<dbReference type="Proteomes" id="UP000001014">
    <property type="component" value="Chromosome"/>
</dbReference>
<dbReference type="GO" id="GO:0005829">
    <property type="term" value="C:cytosol"/>
    <property type="evidence" value="ECO:0000318"/>
    <property type="project" value="GO_Central"/>
</dbReference>
<dbReference type="GO" id="GO:0004807">
    <property type="term" value="F:triose-phosphate isomerase activity"/>
    <property type="evidence" value="ECO:0000318"/>
    <property type="project" value="GO_Central"/>
</dbReference>
<dbReference type="GO" id="GO:0006094">
    <property type="term" value="P:gluconeogenesis"/>
    <property type="evidence" value="ECO:0000318"/>
    <property type="project" value="GO_Central"/>
</dbReference>
<dbReference type="GO" id="GO:0046166">
    <property type="term" value="P:glyceraldehyde-3-phosphate biosynthetic process"/>
    <property type="evidence" value="ECO:0000318"/>
    <property type="project" value="GO_Central"/>
</dbReference>
<dbReference type="GO" id="GO:0019563">
    <property type="term" value="P:glycerol catabolic process"/>
    <property type="evidence" value="ECO:0000318"/>
    <property type="project" value="GO_Central"/>
</dbReference>
<dbReference type="GO" id="GO:0006096">
    <property type="term" value="P:glycolytic process"/>
    <property type="evidence" value="ECO:0000318"/>
    <property type="project" value="GO_Central"/>
</dbReference>
<dbReference type="CDD" id="cd00311">
    <property type="entry name" value="TIM"/>
    <property type="match status" value="1"/>
</dbReference>
<dbReference type="FunFam" id="3.20.20.70:FF:000020">
    <property type="entry name" value="Triosephosphate isomerase"/>
    <property type="match status" value="1"/>
</dbReference>
<dbReference type="Gene3D" id="3.20.20.70">
    <property type="entry name" value="Aldolase class I"/>
    <property type="match status" value="1"/>
</dbReference>
<dbReference type="HAMAP" id="MF_00147_B">
    <property type="entry name" value="TIM_B"/>
    <property type="match status" value="1"/>
</dbReference>
<dbReference type="InterPro" id="IPR013785">
    <property type="entry name" value="Aldolase_TIM"/>
</dbReference>
<dbReference type="InterPro" id="IPR035990">
    <property type="entry name" value="TIM_sf"/>
</dbReference>
<dbReference type="InterPro" id="IPR022896">
    <property type="entry name" value="TrioseP_Isoase_bac/euk"/>
</dbReference>
<dbReference type="InterPro" id="IPR000652">
    <property type="entry name" value="Triosephosphate_isomerase"/>
</dbReference>
<dbReference type="InterPro" id="IPR020861">
    <property type="entry name" value="Triosephosphate_isomerase_AS"/>
</dbReference>
<dbReference type="NCBIfam" id="TIGR00419">
    <property type="entry name" value="tim"/>
    <property type="match status" value="1"/>
</dbReference>
<dbReference type="PANTHER" id="PTHR21139">
    <property type="entry name" value="TRIOSEPHOSPHATE ISOMERASE"/>
    <property type="match status" value="1"/>
</dbReference>
<dbReference type="PANTHER" id="PTHR21139:SF42">
    <property type="entry name" value="TRIOSEPHOSPHATE ISOMERASE"/>
    <property type="match status" value="1"/>
</dbReference>
<dbReference type="Pfam" id="PF00121">
    <property type="entry name" value="TIM"/>
    <property type="match status" value="1"/>
</dbReference>
<dbReference type="SUPFAM" id="SSF51351">
    <property type="entry name" value="Triosephosphate isomerase (TIM)"/>
    <property type="match status" value="1"/>
</dbReference>
<dbReference type="PROSITE" id="PS00171">
    <property type="entry name" value="TIM_1"/>
    <property type="match status" value="1"/>
</dbReference>
<dbReference type="PROSITE" id="PS51440">
    <property type="entry name" value="TIM_2"/>
    <property type="match status" value="1"/>
</dbReference>
<feature type="chain" id="PRO_0000090280" description="Triosephosphate isomerase">
    <location>
        <begin position="1"/>
        <end position="255"/>
    </location>
</feature>
<feature type="active site" description="Electrophile" evidence="1">
    <location>
        <position position="95"/>
    </location>
</feature>
<feature type="active site" description="Proton acceptor" evidence="1">
    <location>
        <position position="167"/>
    </location>
</feature>
<feature type="binding site" evidence="1">
    <location>
        <begin position="9"/>
        <end position="11"/>
    </location>
    <ligand>
        <name>substrate</name>
    </ligand>
</feature>
<feature type="binding site" evidence="1">
    <location>
        <position position="173"/>
    </location>
    <ligand>
        <name>substrate</name>
    </ligand>
</feature>
<feature type="binding site" evidence="1">
    <location>
        <position position="212"/>
    </location>
    <ligand>
        <name>substrate</name>
    </ligand>
</feature>
<feature type="binding site" evidence="1">
    <location>
        <begin position="233"/>
        <end position="234"/>
    </location>
    <ligand>
        <name>substrate</name>
    </ligand>
</feature>
<proteinExistence type="inferred from homology"/>
<name>TPIS_SALTY</name>
<evidence type="ECO:0000255" key="1">
    <source>
        <dbReference type="HAMAP-Rule" id="MF_00147"/>
    </source>
</evidence>
<sequence length="255" mass="26917">MRHPLVMGNWKLNGSRHMVNELVANLRKELTGVAGCDVAIAPPEMYIDLAKRAAAGSHIMLGAQNVDLNLSGAFTGETSAEMLKDIGAQYIIIGHSERRTYHKESDELIAKKFAVLKEQGLTPVLCIGETEAENEAGKTEEVCARQIDAVLKTQGAAAFEGAVIAYEPVWAIGTGKSATPAQAQAVHKFIRDHIAKADAKIAEQVIIQYGGSVNASNAAELFAQPDIDGALVGGASLKADAFAVIVKAAEAAKQA</sequence>